<proteinExistence type="inferred from homology"/>
<dbReference type="EMBL" id="CP000946">
    <property type="protein sequence ID" value="ACA78228.1"/>
    <property type="molecule type" value="Genomic_DNA"/>
</dbReference>
<dbReference type="RefSeq" id="WP_000209915.1">
    <property type="nucleotide sequence ID" value="NZ_MTFT01000050.1"/>
</dbReference>
<dbReference type="SMR" id="B1IV99"/>
<dbReference type="KEGG" id="ecl:EcolC_2597"/>
<dbReference type="HOGENOM" id="CLU_077650_4_0_6"/>
<dbReference type="GO" id="GO:0005737">
    <property type="term" value="C:cytoplasm"/>
    <property type="evidence" value="ECO:0007669"/>
    <property type="project" value="UniProtKB-SubCell"/>
</dbReference>
<dbReference type="GO" id="GO:0051259">
    <property type="term" value="P:protein complex oligomerization"/>
    <property type="evidence" value="ECO:0007669"/>
    <property type="project" value="InterPro"/>
</dbReference>
<dbReference type="GO" id="GO:0006457">
    <property type="term" value="P:protein folding"/>
    <property type="evidence" value="ECO:0007669"/>
    <property type="project" value="UniProtKB-UniRule"/>
</dbReference>
<dbReference type="FunFam" id="1.20.120.1820:FF:000001">
    <property type="entry name" value="Chaperone protein TorD"/>
    <property type="match status" value="1"/>
</dbReference>
<dbReference type="FunFam" id="1.20.1280.20:FF:000003">
    <property type="entry name" value="Chaperone protein TorD"/>
    <property type="match status" value="1"/>
</dbReference>
<dbReference type="Gene3D" id="1.20.120.1820">
    <property type="match status" value="1"/>
</dbReference>
<dbReference type="Gene3D" id="1.20.1280.20">
    <property type="entry name" value="HscB, C-terminal domain"/>
    <property type="match status" value="1"/>
</dbReference>
<dbReference type="HAMAP" id="MF_01150">
    <property type="entry name" value="TorD"/>
    <property type="match status" value="1"/>
</dbReference>
<dbReference type="InterPro" id="IPR023069">
    <property type="entry name" value="Chaperone_TorD"/>
</dbReference>
<dbReference type="InterPro" id="IPR020945">
    <property type="entry name" value="DMSO/NO3_reduct_chaperone"/>
</dbReference>
<dbReference type="InterPro" id="IPR036386">
    <property type="entry name" value="HscB_C_sf"/>
</dbReference>
<dbReference type="InterPro" id="IPR036411">
    <property type="entry name" value="TorD-like_sf"/>
</dbReference>
<dbReference type="InterPro" id="IPR050289">
    <property type="entry name" value="TorD/DmsD_chaperones"/>
</dbReference>
<dbReference type="NCBIfam" id="NF003442">
    <property type="entry name" value="PRK04976.1"/>
    <property type="match status" value="1"/>
</dbReference>
<dbReference type="PANTHER" id="PTHR34227:SF11">
    <property type="entry name" value="CHAPERONE PROTEIN TORD"/>
    <property type="match status" value="1"/>
</dbReference>
<dbReference type="PANTHER" id="PTHR34227">
    <property type="entry name" value="CHAPERONE PROTEIN YCDY"/>
    <property type="match status" value="1"/>
</dbReference>
<dbReference type="Pfam" id="PF02613">
    <property type="entry name" value="Nitrate_red_del"/>
    <property type="match status" value="1"/>
</dbReference>
<dbReference type="SUPFAM" id="SSF89155">
    <property type="entry name" value="TorD-like"/>
    <property type="match status" value="1"/>
</dbReference>
<comment type="function">
    <text evidence="1">Involved in the biogenesis of TorA. Acts on TorA before the insertion of the molybdenum cofactor and, as a result, probably favors a conformation of the apoenzyme that is competent for acquiring the cofactor.</text>
</comment>
<comment type="subcellular location">
    <subcellularLocation>
        <location evidence="1">Cytoplasm</location>
    </subcellularLocation>
</comment>
<comment type="similarity">
    <text evidence="1">Belongs to the TorD/DmsD family. TorD subfamily.</text>
</comment>
<protein>
    <recommendedName>
        <fullName evidence="1">Chaperone protein TorD</fullName>
    </recommendedName>
</protein>
<organism>
    <name type="scientific">Escherichia coli (strain ATCC 8739 / DSM 1576 / NBRC 3972 / NCIMB 8545 / WDCM 00012 / Crooks)</name>
    <dbReference type="NCBI Taxonomy" id="481805"/>
    <lineage>
        <taxon>Bacteria</taxon>
        <taxon>Pseudomonadati</taxon>
        <taxon>Pseudomonadota</taxon>
        <taxon>Gammaproteobacteria</taxon>
        <taxon>Enterobacterales</taxon>
        <taxon>Enterobacteriaceae</taxon>
        <taxon>Escherichia</taxon>
    </lineage>
</organism>
<feature type="chain" id="PRO_1000085100" description="Chaperone protein TorD">
    <location>
        <begin position="1"/>
        <end position="199"/>
    </location>
</feature>
<gene>
    <name evidence="1" type="primary">torD</name>
    <name type="ordered locus">EcolC_2597</name>
</gene>
<keyword id="KW-0143">Chaperone</keyword>
<keyword id="KW-0963">Cytoplasm</keyword>
<reference key="1">
    <citation type="submission" date="2008-02" db="EMBL/GenBank/DDBJ databases">
        <title>Complete sequence of Escherichia coli C str. ATCC 8739.</title>
        <authorList>
            <person name="Copeland A."/>
            <person name="Lucas S."/>
            <person name="Lapidus A."/>
            <person name="Glavina del Rio T."/>
            <person name="Dalin E."/>
            <person name="Tice H."/>
            <person name="Bruce D."/>
            <person name="Goodwin L."/>
            <person name="Pitluck S."/>
            <person name="Kiss H."/>
            <person name="Brettin T."/>
            <person name="Detter J.C."/>
            <person name="Han C."/>
            <person name="Kuske C.R."/>
            <person name="Schmutz J."/>
            <person name="Larimer F."/>
            <person name="Land M."/>
            <person name="Hauser L."/>
            <person name="Kyrpides N."/>
            <person name="Mikhailova N."/>
            <person name="Ingram L."/>
            <person name="Richardson P."/>
        </authorList>
    </citation>
    <scope>NUCLEOTIDE SEQUENCE [LARGE SCALE GENOMIC DNA]</scope>
    <source>
        <strain>ATCC 8739 / DSM 1576 / NBRC 3972 / NCIMB 8545 / WDCM 00012 / Crooks</strain>
    </source>
</reference>
<evidence type="ECO:0000255" key="1">
    <source>
        <dbReference type="HAMAP-Rule" id="MF_01150"/>
    </source>
</evidence>
<name>TORD_ECOLC</name>
<accession>B1IV99</accession>
<sequence>MTTLTAQQIACVYAWLAQLFSRELDDEQLTQIASAQMAEWFSLLKSEPPLVAAVNELENCIATLTVRDDARLELAADFCGLFLMTDKQAALPYASAYKQDEQEIKRLLVEAGMETSGNFNEPADHLAIYLELLSHLHFSLGEGTVPARRIDSLRQKTLTALWQWLPEFVARCRQYDSFGFYAALSQLLLVLVECDHQNR</sequence>